<organism>
    <name type="scientific">Daucus carota</name>
    <name type="common">Wild carrot</name>
    <dbReference type="NCBI Taxonomy" id="4039"/>
    <lineage>
        <taxon>Eukaryota</taxon>
        <taxon>Viridiplantae</taxon>
        <taxon>Streptophyta</taxon>
        <taxon>Embryophyta</taxon>
        <taxon>Tracheophyta</taxon>
        <taxon>Spermatophyta</taxon>
        <taxon>Magnoliopsida</taxon>
        <taxon>eudicotyledons</taxon>
        <taxon>Gunneridae</taxon>
        <taxon>Pentapetalae</taxon>
        <taxon>asterids</taxon>
        <taxon>campanulids</taxon>
        <taxon>Apiales</taxon>
        <taxon>Apiaceae</taxon>
        <taxon>Apioideae</taxon>
        <taxon>Scandiceae</taxon>
        <taxon>Daucinae</taxon>
        <taxon>Daucus</taxon>
        <taxon>Daucus sect. Daucus</taxon>
    </lineage>
</organism>
<protein>
    <recommendedName>
        <fullName>Unknown protein 3</fullName>
    </recommendedName>
</protein>
<reference evidence="1" key="1">
    <citation type="submission" date="2008-07" db="UniProtKB">
        <authorList>
            <person name="Sabater Jara A.B."/>
            <person name="Casado-Vela J."/>
            <person name="Bru R."/>
            <person name="Pedreno M.A."/>
        </authorList>
    </citation>
    <scope>PROTEIN SEQUENCE</scope>
</reference>
<feature type="chain" id="PRO_0000355609" description="Unknown protein 3">
    <location>
        <begin position="1" status="less than"/>
        <end position="8" status="greater than"/>
    </location>
</feature>
<feature type="unsure residue" description="L or I">
    <location>
        <position position="6"/>
    </location>
</feature>
<feature type="non-terminal residue">
    <location>
        <position position="1"/>
    </location>
</feature>
<feature type="non-terminal residue">
    <location>
        <position position="8"/>
    </location>
</feature>
<name>UP03_DAUCA</name>
<accession>P86061</accession>
<keyword id="KW-0903">Direct protein sequencing</keyword>
<proteinExistence type="evidence at protein level"/>
<evidence type="ECO:0000305" key="1"/>
<sequence>CSVVDLAR</sequence>